<sequence length="136" mass="14945">MIWKRKITLEALNAMGEGNMVGFLDIRFEHIGDDTLEATMPVDSRTKQPFGLLHGGASVVLAESIGSVAGYLCTEGEQKVVGLEINANHVRSAREGRVRGVCKPLHLGSRHQVWQIEIFDEKGRLCCSSRLTTAIL</sequence>
<accession>P77781</accession>
<dbReference type="EC" id="3.1.2.28" evidence="1 3 4"/>
<dbReference type="EMBL" id="U00096">
    <property type="protein sequence ID" value="AAC74756.1"/>
    <property type="molecule type" value="Genomic_DNA"/>
</dbReference>
<dbReference type="EMBL" id="AP009048">
    <property type="protein sequence ID" value="BAA15452.1"/>
    <property type="molecule type" value="Genomic_DNA"/>
</dbReference>
<dbReference type="PIR" id="F64926">
    <property type="entry name" value="F64926"/>
</dbReference>
<dbReference type="RefSeq" id="NP_416201.1">
    <property type="nucleotide sequence ID" value="NC_000913.3"/>
</dbReference>
<dbReference type="RefSeq" id="WP_000637982.1">
    <property type="nucleotide sequence ID" value="NZ_STEB01000003.1"/>
</dbReference>
<dbReference type="PDB" id="1SBK">
    <property type="method" value="X-ray"/>
    <property type="resolution" value="2.00 A"/>
    <property type="chains" value="A/B/C/D=1-136"/>
</dbReference>
<dbReference type="PDB" id="1VH5">
    <property type="method" value="X-ray"/>
    <property type="resolution" value="1.34 A"/>
    <property type="chains" value="A/B=2-136"/>
</dbReference>
<dbReference type="PDB" id="1VI8">
    <property type="method" value="X-ray"/>
    <property type="resolution" value="2.20 A"/>
    <property type="chains" value="A/B/C/D/E/F/G/H=2-136"/>
</dbReference>
<dbReference type="PDB" id="4K49">
    <property type="method" value="X-ray"/>
    <property type="resolution" value="1.89 A"/>
    <property type="chains" value="A/B/C/D=1-136"/>
</dbReference>
<dbReference type="PDB" id="4K4A">
    <property type="method" value="X-ray"/>
    <property type="resolution" value="1.89 A"/>
    <property type="chains" value="A/B/C/D=1-136"/>
</dbReference>
<dbReference type="PDB" id="4K4B">
    <property type="method" value="X-ray"/>
    <property type="resolution" value="1.90 A"/>
    <property type="chains" value="A/B/C/D/E/F/G/H=1-136"/>
</dbReference>
<dbReference type="PDBsum" id="1SBK"/>
<dbReference type="PDBsum" id="1VH5"/>
<dbReference type="PDBsum" id="1VI8"/>
<dbReference type="PDBsum" id="4K49"/>
<dbReference type="PDBsum" id="4K4A"/>
<dbReference type="PDBsum" id="4K4B"/>
<dbReference type="SMR" id="P77781"/>
<dbReference type="BioGRID" id="4259131">
    <property type="interactions" value="27"/>
</dbReference>
<dbReference type="DIP" id="DIP-11750N"/>
<dbReference type="FunCoup" id="P77781">
    <property type="interactions" value="262"/>
</dbReference>
<dbReference type="IntAct" id="P77781">
    <property type="interactions" value="3"/>
</dbReference>
<dbReference type="STRING" id="511145.b1686"/>
<dbReference type="jPOST" id="P77781"/>
<dbReference type="PaxDb" id="511145-b1686"/>
<dbReference type="EnsemblBacteria" id="AAC74756">
    <property type="protein sequence ID" value="AAC74756"/>
    <property type="gene ID" value="b1686"/>
</dbReference>
<dbReference type="GeneID" id="75204532"/>
<dbReference type="GeneID" id="946190"/>
<dbReference type="KEGG" id="ecj:JW1676"/>
<dbReference type="KEGG" id="eco:b1686"/>
<dbReference type="KEGG" id="ecoc:C3026_09655"/>
<dbReference type="PATRIC" id="fig|511145.12.peg.1757"/>
<dbReference type="EchoBASE" id="EB3725"/>
<dbReference type="eggNOG" id="COG2050">
    <property type="taxonomic scope" value="Bacteria"/>
</dbReference>
<dbReference type="HOGENOM" id="CLU_089876_13_1_6"/>
<dbReference type="InParanoid" id="P77781"/>
<dbReference type="OMA" id="TTQVWQI"/>
<dbReference type="OrthoDB" id="9798208at2"/>
<dbReference type="PhylomeDB" id="P77781"/>
<dbReference type="BioCyc" id="EcoCyc:G6912-MONOMER"/>
<dbReference type="BioCyc" id="MetaCyc:G6912-MONOMER"/>
<dbReference type="BRENDA" id="3.1.2.2">
    <property type="organism ID" value="2026"/>
</dbReference>
<dbReference type="BRENDA" id="3.1.2.28">
    <property type="organism ID" value="2026"/>
</dbReference>
<dbReference type="UniPathway" id="UPA00079"/>
<dbReference type="UniPathway" id="UPA01057">
    <property type="reaction ID" value="UER01033"/>
</dbReference>
<dbReference type="EvolutionaryTrace" id="P77781"/>
<dbReference type="PRO" id="PR:P77781"/>
<dbReference type="Proteomes" id="UP000000625">
    <property type="component" value="Chromosome"/>
</dbReference>
<dbReference type="GO" id="GO:0005829">
    <property type="term" value="C:cytosol"/>
    <property type="evidence" value="ECO:0000318"/>
    <property type="project" value="GO_Central"/>
</dbReference>
<dbReference type="GO" id="GO:0061522">
    <property type="term" value="F:1,4-dihydroxy-2-naphthoyl-CoA thioesterase activity"/>
    <property type="evidence" value="ECO:0000314"/>
    <property type="project" value="EcoCyc"/>
</dbReference>
<dbReference type="GO" id="GO:0016289">
    <property type="term" value="F:acyl-CoA hydrolase activity"/>
    <property type="evidence" value="ECO:0000314"/>
    <property type="project" value="EcoCyc"/>
</dbReference>
<dbReference type="GO" id="GO:0016787">
    <property type="term" value="F:hydrolase activity"/>
    <property type="evidence" value="ECO:0000314"/>
    <property type="project" value="EcoCyc"/>
</dbReference>
<dbReference type="GO" id="GO:0009234">
    <property type="term" value="P:menaquinone biosynthetic process"/>
    <property type="evidence" value="ECO:0000315"/>
    <property type="project" value="CACAO"/>
</dbReference>
<dbReference type="CDD" id="cd03443">
    <property type="entry name" value="PaaI_thioesterase"/>
    <property type="match status" value="1"/>
</dbReference>
<dbReference type="FunFam" id="3.10.129.10:FF:000002">
    <property type="entry name" value="1,4-dihydroxy-2-naphthoyl-CoA hydrolase"/>
    <property type="match status" value="1"/>
</dbReference>
<dbReference type="Gene3D" id="3.10.129.10">
    <property type="entry name" value="Hotdog Thioesterase"/>
    <property type="match status" value="1"/>
</dbReference>
<dbReference type="HAMAP" id="MF_01936">
    <property type="entry name" value="MenI"/>
    <property type="match status" value="1"/>
</dbReference>
<dbReference type="InterPro" id="IPR029069">
    <property type="entry name" value="HotDog_dom_sf"/>
</dbReference>
<dbReference type="InterPro" id="IPR030863">
    <property type="entry name" value="MenI"/>
</dbReference>
<dbReference type="InterPro" id="IPR003736">
    <property type="entry name" value="PAAI_dom"/>
</dbReference>
<dbReference type="InterPro" id="IPR006683">
    <property type="entry name" value="Thioestr_dom"/>
</dbReference>
<dbReference type="NCBIfam" id="NF007631">
    <property type="entry name" value="PRK10293.1"/>
    <property type="match status" value="1"/>
</dbReference>
<dbReference type="NCBIfam" id="TIGR00369">
    <property type="entry name" value="unchar_dom_1"/>
    <property type="match status" value="1"/>
</dbReference>
<dbReference type="PANTHER" id="PTHR43240">
    <property type="entry name" value="1,4-DIHYDROXY-2-NAPHTHOYL-COA THIOESTERASE 1"/>
    <property type="match status" value="1"/>
</dbReference>
<dbReference type="PANTHER" id="PTHR43240:SF5">
    <property type="entry name" value="1,4-DIHYDROXY-2-NAPHTHOYL-COA THIOESTERASE 1"/>
    <property type="match status" value="1"/>
</dbReference>
<dbReference type="Pfam" id="PF03061">
    <property type="entry name" value="4HBT"/>
    <property type="match status" value="1"/>
</dbReference>
<dbReference type="SUPFAM" id="SSF54637">
    <property type="entry name" value="Thioesterase/thiol ester dehydrase-isomerase"/>
    <property type="match status" value="1"/>
</dbReference>
<evidence type="ECO:0000255" key="1">
    <source>
        <dbReference type="HAMAP-Rule" id="MF_01936"/>
    </source>
</evidence>
<evidence type="ECO:0000269" key="2">
    <source>
    </source>
</evidence>
<evidence type="ECO:0000269" key="3">
    <source>
    </source>
</evidence>
<evidence type="ECO:0000269" key="4">
    <source>
    </source>
</evidence>
<evidence type="ECO:0000269" key="5">
    <source>
    </source>
</evidence>
<evidence type="ECO:0000303" key="6">
    <source>
    </source>
</evidence>
<evidence type="ECO:0000303" key="7">
    <source>
    </source>
</evidence>
<evidence type="ECO:0000305" key="8"/>
<evidence type="ECO:0007829" key="9">
    <source>
        <dbReference type="PDB" id="1VH5"/>
    </source>
</evidence>
<reference key="1">
    <citation type="journal article" date="1997" name="DNA Res.">
        <title>Construction of a contiguous 874-kb sequence of the Escherichia coli-K12 genome corresponding to 50.0-68.8 min on the linkage map and analysis of its sequence features.</title>
        <authorList>
            <person name="Yamamoto Y."/>
            <person name="Aiba H."/>
            <person name="Baba T."/>
            <person name="Hayashi K."/>
            <person name="Inada T."/>
            <person name="Isono K."/>
            <person name="Itoh T."/>
            <person name="Kimura S."/>
            <person name="Kitagawa M."/>
            <person name="Makino K."/>
            <person name="Miki T."/>
            <person name="Mitsuhashi N."/>
            <person name="Mizobuchi K."/>
            <person name="Mori H."/>
            <person name="Nakade S."/>
            <person name="Nakamura Y."/>
            <person name="Nashimoto H."/>
            <person name="Oshima T."/>
            <person name="Oyama S."/>
            <person name="Saito N."/>
            <person name="Sampei G."/>
            <person name="Satoh Y."/>
            <person name="Sivasundaram S."/>
            <person name="Tagami H."/>
            <person name="Takahashi H."/>
            <person name="Takeda J."/>
            <person name="Takemoto K."/>
            <person name="Uehara K."/>
            <person name="Wada C."/>
            <person name="Yamagata S."/>
            <person name="Horiuchi T."/>
        </authorList>
    </citation>
    <scope>NUCLEOTIDE SEQUENCE [LARGE SCALE GENOMIC DNA]</scope>
    <source>
        <strain>K12 / W3110 / ATCC 27325 / DSM 5911</strain>
    </source>
</reference>
<reference key="2">
    <citation type="journal article" date="1997" name="Science">
        <title>The complete genome sequence of Escherichia coli K-12.</title>
        <authorList>
            <person name="Blattner F.R."/>
            <person name="Plunkett G. III"/>
            <person name="Bloch C.A."/>
            <person name="Perna N.T."/>
            <person name="Burland V."/>
            <person name="Riley M."/>
            <person name="Collado-Vides J."/>
            <person name="Glasner J.D."/>
            <person name="Rode C.K."/>
            <person name="Mayhew G.F."/>
            <person name="Gregor J."/>
            <person name="Davis N.W."/>
            <person name="Kirkpatrick H.A."/>
            <person name="Goeden M.A."/>
            <person name="Rose D.J."/>
            <person name="Mau B."/>
            <person name="Shao Y."/>
        </authorList>
    </citation>
    <scope>NUCLEOTIDE SEQUENCE [LARGE SCALE GENOMIC DNA]</scope>
    <source>
        <strain>K12 / MG1655 / ATCC 47076</strain>
    </source>
</reference>
<reference key="3">
    <citation type="journal article" date="2006" name="Mol. Syst. Biol.">
        <title>Highly accurate genome sequences of Escherichia coli K-12 strains MG1655 and W3110.</title>
        <authorList>
            <person name="Hayashi K."/>
            <person name="Morooka N."/>
            <person name="Yamamoto Y."/>
            <person name="Fujita K."/>
            <person name="Isono K."/>
            <person name="Choi S."/>
            <person name="Ohtsubo E."/>
            <person name="Baba T."/>
            <person name="Wanner B.L."/>
            <person name="Mori H."/>
            <person name="Horiuchi T."/>
        </authorList>
    </citation>
    <scope>NUCLEOTIDE SEQUENCE [LARGE SCALE GENOMIC DNA]</scope>
    <source>
        <strain>K12 / W3110 / ATCC 27325 / DSM 5911</strain>
    </source>
</reference>
<reference key="4">
    <citation type="journal article" date="2005" name="FEMS Microbiol. Rev.">
        <title>Enzyme genomics: application of general enzymatic screens to discover new enzymes.</title>
        <authorList>
            <person name="Kuznetsova E."/>
            <person name="Proudfoot M."/>
            <person name="Sanders S.A."/>
            <person name="Reinking J."/>
            <person name="Savchenko A."/>
            <person name="Arrowsmith C.H."/>
            <person name="Edwards A.M."/>
            <person name="Yakunin A.F."/>
        </authorList>
    </citation>
    <scope>FUNCTION AS AN ESTERASE</scope>
</reference>
<reference key="5">
    <citation type="journal article" date="2013" name="J. Bacteriol.">
        <title>Identification of a hotdog fold thioesterase involved in the biosynthesis of menaquinone in Escherichia coli.</title>
        <authorList>
            <person name="Chen M."/>
            <person name="Ma X."/>
            <person name="Chen X."/>
            <person name="Jiang M."/>
            <person name="Song H."/>
            <person name="Guo Z."/>
        </authorList>
    </citation>
    <scope>FUNCTION</scope>
    <scope>CATALYTIC ACTIVITY</scope>
    <scope>BIOPHYSICOCHEMICAL PROPERTIES</scope>
    <scope>PATHWAY</scope>
    <scope>DISRUPTION PHENOTYPE</scope>
    <source>
        <strain>K12 / BW25113</strain>
    </source>
</reference>
<reference key="6">
    <citation type="journal article" date="2014" name="Biochemistry">
        <title>Divergence of substrate specificity and function in the Escherichia coli hotdog-fold thioesterase paralogs YdiI and YbdB.</title>
        <authorList>
            <person name="Latham J.A."/>
            <person name="Chen D."/>
            <person name="Allen K.N."/>
            <person name="Dunaway-Mariano D."/>
        </authorList>
    </citation>
    <scope>FUNCTION</scope>
    <scope>CATALYTIC ACTIVITY</scope>
    <scope>BIOPHYSICOCHEMICAL PROPERTIES</scope>
    <scope>PATHWAY</scope>
    <scope>MUTAGENESIS OF VAL-68 AND TYR-71</scope>
</reference>
<reference key="7">
    <citation type="submission" date="2004-02" db="PDB data bank">
        <title>X-ray structure of YDII_ECOLI.</title>
        <authorList>
            <person name="Kuzin A.P."/>
            <person name="Edstrom W."/>
            <person name="Vorobiev S.M."/>
            <person name="Lee I."/>
            <person name="Forouhar F."/>
            <person name="Ma L."/>
            <person name="Chiang Y."/>
            <person name="Rong X."/>
            <person name="Acton T.B."/>
            <person name="Montelione G.T."/>
            <person name="Hunt J.F."/>
            <person name="Tong L."/>
        </authorList>
    </citation>
    <scope>X-RAY CRYSTALLOGRAPHY (2.0 ANGSTROMS)</scope>
</reference>
<reference key="8">
    <citation type="journal article" date="2005" name="Proteins">
        <title>Structural analysis of a set of proteins resulting from a bacterial genomics project.</title>
        <authorList>
            <person name="Badger J."/>
            <person name="Sauder J.M."/>
            <person name="Adams J.M."/>
            <person name="Antonysamy S."/>
            <person name="Bain K."/>
            <person name="Bergseid M.G."/>
            <person name="Buchanan S.G."/>
            <person name="Buchanan M.D."/>
            <person name="Batiyenko Y."/>
            <person name="Christopher J.A."/>
            <person name="Emtage S."/>
            <person name="Eroshkina A."/>
            <person name="Feil I."/>
            <person name="Furlong E.B."/>
            <person name="Gajiwala K.S."/>
            <person name="Gao X."/>
            <person name="He D."/>
            <person name="Hendle J."/>
            <person name="Huber A."/>
            <person name="Hoda K."/>
            <person name="Kearins P."/>
            <person name="Kissinger C."/>
            <person name="Laubert B."/>
            <person name="Lewis H.A."/>
            <person name="Lin J."/>
            <person name="Loomis K."/>
            <person name="Lorimer D."/>
            <person name="Louie G."/>
            <person name="Maletic M."/>
            <person name="Marsh C.D."/>
            <person name="Miller I."/>
            <person name="Molinari J."/>
            <person name="Muller-Dieckmann H.J."/>
            <person name="Newman J.M."/>
            <person name="Noland B.W."/>
            <person name="Pagarigan B."/>
            <person name="Park F."/>
            <person name="Peat T.S."/>
            <person name="Post K.W."/>
            <person name="Radojicic S."/>
            <person name="Ramos A."/>
            <person name="Romero R."/>
            <person name="Rutter M.E."/>
            <person name="Sanderson W.E."/>
            <person name="Schwinn K.D."/>
            <person name="Tresser J."/>
            <person name="Winhoven J."/>
            <person name="Wright T.A."/>
            <person name="Wu L."/>
            <person name="Xu J."/>
            <person name="Harris T.J.R."/>
        </authorList>
    </citation>
    <scope>X-RAY CRYSTALLOGRAPHY (1.34 ANGSTROMS) OF 2-136</scope>
</reference>
<reference key="9">
    <citation type="journal article" date="2014" name="Biochemistry">
        <title>Structure and catalysis in the Escherichia coli hotdog-fold thioesterase paralogs YdiI and YbdB.</title>
        <authorList>
            <person name="Wu R."/>
            <person name="Latham J.A."/>
            <person name="Chen D."/>
            <person name="Farelli J."/>
            <person name="Zhao H."/>
            <person name="Matthews K."/>
            <person name="Allen K.N."/>
            <person name="Dunaway-Mariano D."/>
        </authorList>
    </citation>
    <scope>X-RAY CRYSTALLOGRAPHY (1.89 ANGSTROMS) IN COMPLEXES WITH SUBSTRATE ANALOGS</scope>
    <scope>SUBUNIT</scope>
    <scope>MUTAGENESIS OF GLN-48; HIS-54; GLU-63; SER-64; SER-67; HIS-89; ARG-91; HIS-106 AND SER-109</scope>
    <scope>ACTIVE SITE</scope>
</reference>
<comment type="function">
    <text evidence="2 3 4">Catalyzes the hydrolysis of 1,4-dihydroxy-2-naphthoyl-CoA (DHNA-CoA) to 1,4-dihydroxy-2-naphthoate (DHNA). Also shows significant activity toward a wide range of acyl-CoA thioesters, and minimal activity toward benzoyl-holoEntB.</text>
</comment>
<comment type="catalytic activity">
    <reaction evidence="1 3 4">
        <text>1,4-dihydroxy-2-naphthoyl-CoA + H2O = 1,4-dihydroxy-2-naphthoate + CoA + H(+)</text>
        <dbReference type="Rhea" id="RHEA:26309"/>
        <dbReference type="ChEBI" id="CHEBI:11173"/>
        <dbReference type="ChEBI" id="CHEBI:15377"/>
        <dbReference type="ChEBI" id="CHEBI:15378"/>
        <dbReference type="ChEBI" id="CHEBI:57287"/>
        <dbReference type="ChEBI" id="CHEBI:58897"/>
        <dbReference type="EC" id="3.1.2.28"/>
    </reaction>
</comment>
<comment type="biophysicochemical properties">
    <kinetics>
        <KM evidence="3">2.5 uM for 1,4-dihydroxy-2-naphthoyl-CoA</KM>
        <KM evidence="4">8 uM for 1,4-dihydroxy-2-naphthoyl-CoA</KM>
        <KM evidence="4">1.3 uM for oleoyl-CoA</KM>
        <KM evidence="4">1.5 uM for myristoyl-CoA</KM>
        <KM evidence="3">1.559 uM for acetyl-CoA</KM>
        <KM evidence="4">1.9 uM for palmitoyl-CoA</KM>
        <KM evidence="4">2.2 uM for lauroyl-CoA</KM>
        <KM evidence="3">8 uM for 1-hydroxy-2-naphthoyl-CoA</KM>
        <KM evidence="4">9 uM for 4-hydroxybenzoyl-CoA</KM>
        <KM evidence="4">21 uM for hexanoyl-CoA</KM>
        <KM evidence="4">25 uM for benzoyl-CoA</KM>
        <KM evidence="3">26.5 uM for 3,5-dihydroxybenzoyl-CoA</KM>
        <KM evidence="3">26.9 uM for 3,4-dihydroxybenzoyl-CoA</KM>
        <KM evidence="4">30 uM for coumaroyl-CoA</KM>
        <KM evidence="4">54 uM for benzoyl-ACP</KM>
        <KM evidence="4">69.4 uM for beta-methylcrotonyl-CoA</KM>
        <KM evidence="3">73 uM for salicylyl-CoA</KM>
        <KM evidence="4">115 uM for beta-methylmalonyl-CoA</KM>
        <KM evidence="4">120 uM for propionyl-CoA</KM>
        <KM evidence="4">200 uM for 2,4-dihydroxybenzoyl-EntB</KM>
        <text evidence="3 4">kcat is 6.2 sec(-1) with 1,4-dihydroxy-2-naphthoyl-CoA (PubMed:23564174). kcat is 1.6 sec(-1) with 1,4-dihydroxy-2-naphthoyl-CoA (PubMed:24992697). kcat is 0.12 sec(-1) with oleoyl-CoA. kcat is 0.62 sec(-1) with myristoyl-CoA. kcat is 0.0044 sec(-1) with acetyl-CoA. kcat is 0.58 sec(-1) with palmitoyl-CoA. kcat is 0.74 sec(-1) with lauroyl-CoA. kcat is 14.8 sec(-1) with 1-hydroxy-2-naphthoyl-CoA. kcat is 5.2 sec(-1) with 4-hydroxybenzoyl-CoA. kcat is 0.3 sec(-1) with hexanoyl-CoA. kcat is 17.7 sec(-1) with benzoyl-CoA. kcat is 12.6 sec(-1) with 3,5-dihydroxybenzoyl-CoA. kcat is 23.2 sec(-1) with 3,4-dihydroxybenzoyl-CoA. kcat is 8.4 sec(-1) with coumaroyl-CoA. kcat is 0.083 sec(-1) with benzoyl-ACP. kcat is 0.5 sec(-1) with beta-methylcrotonyl-CoA. kcat is 93.0 sec(-1) with salicylyl-CoA. kcat is 0.67 sec(-1) with beta-methylmalonyl-CoA. kcat is 0.21 sec(-1) with propionyl-CoA. kcat is 0.0036 sec(-1) with 2,4-dihydroxybenzoyl-EntB.</text>
    </kinetics>
</comment>
<comment type="pathway">
    <text evidence="1 3 4">Quinol/quinone metabolism; 1,4-dihydroxy-2-naphthoate biosynthesis; 1,4-dihydroxy-2-naphthoate from chorismate: step 7/7.</text>
</comment>
<comment type="pathway">
    <text evidence="1 3 4">Quinol/quinone metabolism; menaquinone biosynthesis.</text>
</comment>
<comment type="subunit">
    <text evidence="1 5">Homotetramer. Dimer of dimers.</text>
</comment>
<comment type="disruption phenotype">
    <text evidence="3">Deletion results in a significant decrease in menaquinone production.</text>
</comment>
<comment type="similarity">
    <text evidence="1">Belongs to the thioesterase PaaI family.</text>
</comment>
<name>MENI_ECOLI</name>
<protein>
    <recommendedName>
        <fullName evidence="1 8">1,4-dihydroxy-2-naphthoyl-CoA hydrolase</fullName>
        <shortName evidence="1 8">DHNA-CoA hydrolase</shortName>
        <ecNumber evidence="1 3 4">3.1.2.28</ecNumber>
    </recommendedName>
    <alternativeName>
        <fullName evidence="1 6">DHNA-CoA thioesterase</fullName>
    </alternativeName>
</protein>
<keyword id="KW-0002">3D-structure</keyword>
<keyword id="KW-0378">Hydrolase</keyword>
<keyword id="KW-0474">Menaquinone biosynthesis</keyword>
<keyword id="KW-1185">Reference proteome</keyword>
<feature type="chain" id="PRO_0000156678" description="1,4-dihydroxy-2-naphthoyl-CoA hydrolase">
    <location>
        <begin position="1"/>
        <end position="136"/>
    </location>
</feature>
<feature type="active site" description="Nucleophile or proton acceptor" evidence="1 7">
    <location>
        <position position="63"/>
    </location>
</feature>
<feature type="binding site" evidence="1 5">
    <location>
        <position position="82"/>
    </location>
    <ligand>
        <name>substrate</name>
    </ligand>
</feature>
<feature type="binding site" evidence="1 5">
    <location>
        <begin position="89"/>
        <end position="92"/>
    </location>
    <ligand>
        <name>substrate</name>
    </ligand>
</feature>
<feature type="binding site" evidence="1 5">
    <location>
        <begin position="106"/>
        <end position="111"/>
    </location>
    <ligand>
        <name>substrate</name>
    </ligand>
</feature>
<feature type="mutagenesis site" description="Almost loss of activity with benzoyl-CoA as substrate." evidence="5">
    <original>Q</original>
    <variation>A</variation>
    <location>
        <position position="48"/>
    </location>
</feature>
<feature type="mutagenesis site" description="51-fold decrease in catalytic efficiency toward benzoyl-CoA." evidence="5">
    <original>Q</original>
    <variation>N</variation>
    <location>
        <position position="48"/>
    </location>
</feature>
<feature type="mutagenesis site" description="514-fold decrease in catalytic efficiency toward benzoyl-CoA." evidence="5">
    <original>H</original>
    <variation>A</variation>
    <location>
        <position position="54"/>
    </location>
</feature>
<feature type="mutagenesis site" description="Almost loss of activity with benzoyl-CoA as substrate." evidence="5">
    <original>H</original>
    <variation>F</variation>
    <location>
        <position position="54"/>
    </location>
</feature>
<feature type="mutagenesis site" description="Loss of activity with benzoyl-CoA as substrate." evidence="5">
    <original>E</original>
    <variation>A</variation>
    <variation>Q</variation>
    <location>
        <position position="63"/>
    </location>
</feature>
<feature type="mutagenesis site" description="Almost loss of activity with benzoyl-CoA as substrate." evidence="5">
    <original>E</original>
    <variation>D</variation>
    <location>
        <position position="63"/>
    </location>
</feature>
<feature type="mutagenesis site" description="Almost no change in catalytic efficiency toward benzoyl-CoA." evidence="5">
    <original>S</original>
    <variation>A</variation>
    <location>
        <position position="64"/>
    </location>
</feature>
<feature type="mutagenesis site" description="Almost no change in catalytic efficiency toward benzoyl-CoA." evidence="5">
    <original>S</original>
    <variation>A</variation>
    <location>
        <position position="67"/>
    </location>
</feature>
<feature type="mutagenesis site" description="10-fold decrease in catalytic efficiency toward lauroyl-CoA. Does not affect catalytic efficiency toward 1,4-dihydroxy-2-naphthoyl-CoA and benzoyl-CoA." evidence="4">
    <original>V</original>
    <variation>M</variation>
    <location>
        <position position="68"/>
    </location>
</feature>
<feature type="mutagenesis site" description="Does not affect activity." evidence="4">
    <original>Y</original>
    <variation>A</variation>
    <location>
        <position position="71"/>
    </location>
</feature>
<feature type="mutagenesis site" description="156-fold decrease in catalytic efficiency toward benzoyl-CoA." evidence="5">
    <original>H</original>
    <variation>A</variation>
    <location>
        <position position="89"/>
    </location>
</feature>
<feature type="mutagenesis site" description="9-fold decrease in catalytic efficiency toward benzoyl-CoA." evidence="5">
    <original>R</original>
    <variation>A</variation>
    <location>
        <position position="91"/>
    </location>
</feature>
<feature type="mutagenesis site" description="Almost no change in catalytic efficiency toward benzoyl-CoA." evidence="5">
    <original>H</original>
    <variation>A</variation>
    <location>
        <position position="106"/>
    </location>
</feature>
<feature type="mutagenesis site" description="Almost no change in catalytic efficiency toward benzoyl-CoA." evidence="5">
    <original>S</original>
    <variation>A</variation>
    <location>
        <position position="109"/>
    </location>
</feature>
<feature type="helix" evidence="9">
    <location>
        <begin position="9"/>
        <end position="14"/>
    </location>
</feature>
<feature type="turn" evidence="9">
    <location>
        <begin position="15"/>
        <end position="18"/>
    </location>
</feature>
<feature type="helix" evidence="9">
    <location>
        <begin position="20"/>
        <end position="23"/>
    </location>
</feature>
<feature type="strand" evidence="9">
    <location>
        <begin position="27"/>
        <end position="31"/>
    </location>
</feature>
<feature type="strand" evidence="9">
    <location>
        <begin position="36"/>
        <end position="41"/>
    </location>
</feature>
<feature type="turn" evidence="9">
    <location>
        <begin position="44"/>
        <end position="46"/>
    </location>
</feature>
<feature type="strand" evidence="9">
    <location>
        <begin position="51"/>
        <end position="53"/>
    </location>
</feature>
<feature type="helix" evidence="9">
    <location>
        <begin position="55"/>
        <end position="72"/>
    </location>
</feature>
<feature type="strand" evidence="9">
    <location>
        <begin position="79"/>
        <end position="89"/>
    </location>
</feature>
<feature type="strand" evidence="9">
    <location>
        <begin position="95"/>
        <end position="107"/>
    </location>
</feature>
<feature type="strand" evidence="9">
    <location>
        <begin position="109"/>
        <end position="119"/>
    </location>
</feature>
<feature type="strand" evidence="9">
    <location>
        <begin position="125"/>
        <end position="136"/>
    </location>
</feature>
<gene>
    <name evidence="1 6" type="primary">menI</name>
    <name type="synonym">ydiI</name>
    <name type="ordered locus">b1686</name>
    <name type="ordered locus">JW1676</name>
</gene>
<proteinExistence type="evidence at protein level"/>
<organism>
    <name type="scientific">Escherichia coli (strain K12)</name>
    <dbReference type="NCBI Taxonomy" id="83333"/>
    <lineage>
        <taxon>Bacteria</taxon>
        <taxon>Pseudomonadati</taxon>
        <taxon>Pseudomonadota</taxon>
        <taxon>Gammaproteobacteria</taxon>
        <taxon>Enterobacterales</taxon>
        <taxon>Enterobacteriaceae</taxon>
        <taxon>Escherichia</taxon>
    </lineage>
</organism>